<proteinExistence type="evidence at protein level"/>
<protein>
    <recommendedName>
        <fullName evidence="4">Capsid scaffolding protein</fullName>
    </recommendedName>
    <alternativeName>
        <fullName>Capsid protein P40</fullName>
    </alternativeName>
    <alternativeName>
        <fullName evidence="4">Protease precursor</fullName>
        <shortName evidence="4">pPR</shortName>
    </alternativeName>
    <alternativeName>
        <fullName>Protein EC-RF3/EC-RF3A</fullName>
    </alternativeName>
    <alternativeName>
        <fullName>Virion structural protein BVRF2</fullName>
    </alternativeName>
    <component>
        <recommendedName>
            <fullName evidence="4">Assemblin</fullName>
            <ecNumber evidence="4">3.4.21.97</ecNumber>
        </recommendedName>
        <alternativeName>
            <fullName evidence="4">Protease</fullName>
            <shortName evidence="4">Pr</shortName>
        </alternativeName>
    </component>
    <component>
        <recommendedName>
            <fullName evidence="4">Assembly protein</fullName>
            <shortName evidence="4">AP</shortName>
        </recommendedName>
        <alternativeName>
            <fullName evidence="4">Capsid assembly protein</fullName>
        </alternativeName>
    </component>
</protein>
<gene>
    <name evidence="2" type="ORF">BVRF2/BdRF1</name>
</gene>
<organism>
    <name type="scientific">Epstein-Barr virus (strain AG876)</name>
    <name type="common">HHV-4</name>
    <name type="synonym">Human herpesvirus 4</name>
    <dbReference type="NCBI Taxonomy" id="82830"/>
    <lineage>
        <taxon>Viruses</taxon>
        <taxon>Duplodnaviria</taxon>
        <taxon>Heunggongvirae</taxon>
        <taxon>Peploviricota</taxon>
        <taxon>Herviviricetes</taxon>
        <taxon>Herpesvirales</taxon>
        <taxon>Orthoherpesviridae</taxon>
        <taxon>Gammaherpesvirinae</taxon>
        <taxon>Lymphocryptovirus</taxon>
        <taxon>Lymphocryptovirus humangamma4</taxon>
        <taxon>Epstein-Barr virus (strain GD1)</taxon>
    </lineage>
</organism>
<organismHost>
    <name type="scientific">Homo sapiens</name>
    <name type="common">Human</name>
    <dbReference type="NCBI Taxonomy" id="9606"/>
</organismHost>
<feature type="chain" id="PRO_0000379889" description="Capsid scaffolding protein">
    <location>
        <begin position="1"/>
        <end position="605"/>
    </location>
</feature>
<feature type="chain" id="PRO_0000379890" description="Assemblin" evidence="4">
    <location>
        <begin position="1"/>
        <end position="235"/>
    </location>
</feature>
<feature type="chain" id="PRO_0000379891" description="Assembly protein" evidence="4">
    <location>
        <begin position="236"/>
        <end position="605"/>
    </location>
</feature>
<feature type="region of interest" description="Disordered" evidence="5">
    <location>
        <begin position="235"/>
        <end position="275"/>
    </location>
</feature>
<feature type="region of interest" description="Interaction with pAP" evidence="4">
    <location>
        <begin position="281"/>
        <end position="300"/>
    </location>
</feature>
<feature type="region of interest" description="Disordered" evidence="5">
    <location>
        <begin position="403"/>
        <end position="432"/>
    </location>
</feature>
<feature type="region of interest" description="Disordered" evidence="5">
    <location>
        <begin position="489"/>
        <end position="588"/>
    </location>
</feature>
<feature type="region of interest" description="Interaction with major capsid protein" evidence="4">
    <location>
        <begin position="585"/>
        <end position="605"/>
    </location>
</feature>
<feature type="short sequence motif" description="Nuclear localization signal" evidence="1">
    <location>
        <begin position="410"/>
        <end position="416"/>
    </location>
</feature>
<feature type="compositionally biased region" description="Polar residues" evidence="5">
    <location>
        <begin position="568"/>
        <end position="579"/>
    </location>
</feature>
<feature type="active site" description="Charge relay system" evidence="4">
    <location>
        <position position="48"/>
    </location>
</feature>
<feature type="active site" description="Charge relay system" evidence="4">
    <location>
        <position position="116"/>
    </location>
</feature>
<feature type="active site" description="Charge relay system" evidence="4">
    <location>
        <position position="139"/>
    </location>
</feature>
<feature type="site" description="Cleavage; by assemblin; Release site" evidence="4">
    <location>
        <begin position="235"/>
        <end position="236"/>
    </location>
</feature>
<feature type="site" description="Cleavage; by assemblin; Maturation site" evidence="3">
    <location>
        <begin position="568"/>
        <end position="569"/>
    </location>
</feature>
<feature type="splice variant" id="VSP_037729" description="In isoform pAP." evidence="6">
    <location>
        <begin position="1"/>
        <end position="260"/>
    </location>
</feature>
<comment type="function">
    <molecule>Capsid scaffolding protein</molecule>
    <text evidence="4">Acts as a scaffold protein by binding major capsid protein in the cytoplasm, inducing the nuclear localization of both proteins. Multimerizes in the nucleus such as major capsid protein forms the icosahedral T=16 capsid. Autocatalytic cleavage releases the assembly protein, and subsequently abolishes interaction with major capsid protein. Cleavages products are evicted from the capsid before or during DNA packaging.</text>
</comment>
<comment type="function">
    <molecule>Assemblin</molecule>
    <text evidence="4">Protease that plays an essential role in virion assembly within the nucleus. Catalyzes the cleavage of the assembly protein after formation of the spherical procapsid. By that cleavage, the capsid matures and gains its icosahedral shape. The cleavage sites seem to include -Ala-Ser-, -Ala-Ala-, as well as Ala-Thr bonds. Assemblin and cleavages products are evicted from the capsid before or during DNA packaging.</text>
</comment>
<comment type="function">
    <molecule>Assembly protein</molecule>
    <text evidence="4">Plays a major role in capsid assembly. Acts as a scaffold protein by binding major capsid protein. Multimerizes in the nucleus such as major capsid protein forms the icosahedral T=16 capsid. Cleaved by assemblin after capsid completion. The cleavages products are evicted from the capsid before or during DNA packaging.</text>
</comment>
<comment type="catalytic activity">
    <molecule>Assemblin</molecule>
    <reaction evidence="4">
        <text>Cleaves -Ala-|-Ser- and -Ala-|-Ala- bonds in the scaffold protein.</text>
        <dbReference type="EC" id="3.4.21.97"/>
    </reaction>
</comment>
<comment type="subunit">
    <molecule>Capsid scaffolding protein</molecule>
    <text evidence="4">Homomultimer. Interacts with major capsid protein.</text>
</comment>
<comment type="subunit">
    <molecule>Assemblin</molecule>
    <text evidence="4">Exists in a monomer-dimer equilibrium with the dimer being the active species.</text>
</comment>
<comment type="subunit">
    <molecule>Assembly protein</molecule>
    <text evidence="4">Homomultimer. Interacts with major capsid protein.</text>
</comment>
<comment type="interaction">
    <interactant intactId="EBI-2621352">
        <id>Q1HVC7</id>
    </interactant>
    <interactant intactId="EBI-2621293">
        <id>P0CK58</id>
        <label>BALF1</label>
    </interactant>
    <organismsDiffer>true</organismsDiffer>
    <experiments>2</experiments>
</comment>
<comment type="subcellular location">
    <molecule>Capsid scaffolding protein</molecule>
    <subcellularLocation>
        <location evidence="4">Host cytoplasm</location>
    </subcellularLocation>
</comment>
<comment type="subcellular location">
    <molecule>Assemblin</molecule>
    <subcellularLocation>
        <location evidence="4">Host nucleus</location>
    </subcellularLocation>
</comment>
<comment type="subcellular location">
    <molecule>Assembly protein</molecule>
    <subcellularLocation>
        <location evidence="4">Host nucleus</location>
    </subcellularLocation>
</comment>
<comment type="subcellular location">
    <molecule>Isoform pAP</molecule>
    <subcellularLocation>
        <location evidence="2">Host nucleus</location>
    </subcellularLocation>
</comment>
<comment type="alternative products">
    <event type="alternative promoter"/>
    <isoform>
        <id>Q1HVC7-1</id>
        <name>Capsid scaffolding protein</name>
        <name>pPR</name>
        <name>EC-RF3</name>
        <sequence type="displayed"/>
    </isoform>
    <isoform>
        <id>Q1HVC7-2</id>
        <name>pAP</name>
        <name>Assembly protein</name>
        <name>EC-RF3A</name>
        <sequence type="described" ref="VSP_037729"/>
    </isoform>
</comment>
<comment type="domain">
    <text evidence="4">Region of interaction between pPR and pAP is called Amino conserved domain (ACD). The region of interaction with major capsid protein is called carboxyl conserved domain (CCD).</text>
</comment>
<comment type="PTM">
    <molecule>Capsid scaffolding protein</molecule>
    <text evidence="4">Capsid scaffolding protein is cleaved by assemblin after formation of the spherical procapsid. As a result, the capsid obtains its mature, icosahedral shape. Cleavages occur at two or more sites: release (R-site) and maturation (M-site).</text>
</comment>
<comment type="similarity">
    <text evidence="4">Belongs to the herpesviridae capsid scaffolding protein family.</text>
</comment>
<comment type="caution">
    <text evidence="6">Be careful of the possible confusion between BDRF1 with BdRF1.</text>
</comment>
<name>SCAF_EBVA8</name>
<reference key="1">
    <citation type="journal article" date="2006" name="Virology">
        <title>The genome of Epstein-Barr virus type 2 strain AG876.</title>
        <authorList>
            <person name="Dolan A."/>
            <person name="Addison C."/>
            <person name="Gatherer D."/>
            <person name="Davison A.J."/>
            <person name="McGeoch D.J."/>
        </authorList>
    </citation>
    <scope>NUCLEOTIDE SEQUENCE [LARGE SCALE GENOMIC DNA]</scope>
</reference>
<dbReference type="EC" id="3.4.21.97" evidence="4"/>
<dbReference type="EMBL" id="DQ279927">
    <property type="protein sequence ID" value="ABB89280.1"/>
    <property type="molecule type" value="Genomic_DNA"/>
</dbReference>
<dbReference type="EMBL" id="DQ279927">
    <property type="protein sequence ID" value="ABB89281.1"/>
    <property type="status" value="ALT_SEQ"/>
    <property type="molecule type" value="Genomic_DNA"/>
</dbReference>
<dbReference type="RefSeq" id="YP_001129501.1">
    <property type="nucleotide sequence ID" value="NC_009334.1"/>
</dbReference>
<dbReference type="SMR" id="Q1HVC7"/>
<dbReference type="IntAct" id="Q1HVC7">
    <property type="interactions" value="1"/>
</dbReference>
<dbReference type="MEROPS" id="S21.003"/>
<dbReference type="KEGG" id="vg:5176187"/>
<dbReference type="KEGG" id="vg:5176196"/>
<dbReference type="Proteomes" id="UP000007639">
    <property type="component" value="Genome"/>
</dbReference>
<dbReference type="GO" id="GO:0030430">
    <property type="term" value="C:host cell cytoplasm"/>
    <property type="evidence" value="ECO:0007669"/>
    <property type="project" value="UniProtKB-SubCell"/>
</dbReference>
<dbReference type="GO" id="GO:0042025">
    <property type="term" value="C:host cell nucleus"/>
    <property type="evidence" value="ECO:0007669"/>
    <property type="project" value="UniProtKB-SubCell"/>
</dbReference>
<dbReference type="GO" id="GO:0042802">
    <property type="term" value="F:identical protein binding"/>
    <property type="evidence" value="ECO:0007669"/>
    <property type="project" value="UniProtKB-UniRule"/>
</dbReference>
<dbReference type="GO" id="GO:0004252">
    <property type="term" value="F:serine-type endopeptidase activity"/>
    <property type="evidence" value="ECO:0007669"/>
    <property type="project" value="UniProtKB-UniRule"/>
</dbReference>
<dbReference type="GO" id="GO:0039708">
    <property type="term" value="P:nuclear capsid assembly"/>
    <property type="evidence" value="ECO:0000314"/>
    <property type="project" value="UniProtKB"/>
</dbReference>
<dbReference type="GO" id="GO:0006508">
    <property type="term" value="P:proteolysis"/>
    <property type="evidence" value="ECO:0007669"/>
    <property type="project" value="UniProtKB-KW"/>
</dbReference>
<dbReference type="GO" id="GO:0019076">
    <property type="term" value="P:viral release from host cell"/>
    <property type="evidence" value="ECO:0007669"/>
    <property type="project" value="UniProtKB-UniRule"/>
</dbReference>
<dbReference type="Gene3D" id="3.20.16.10">
    <property type="entry name" value="Herpesvirus/Caudovirus protease domain"/>
    <property type="match status" value="1"/>
</dbReference>
<dbReference type="HAMAP" id="MF_04008">
    <property type="entry name" value="HSV_SCAF"/>
    <property type="match status" value="1"/>
</dbReference>
<dbReference type="InterPro" id="IPR035443">
    <property type="entry name" value="Herpes_virus_sf"/>
</dbReference>
<dbReference type="InterPro" id="IPR001847">
    <property type="entry name" value="Peptidase_S21"/>
</dbReference>
<dbReference type="Pfam" id="PF00716">
    <property type="entry name" value="Peptidase_S21"/>
    <property type="match status" value="1"/>
</dbReference>
<dbReference type="PRINTS" id="PR00236">
    <property type="entry name" value="HSVCAPSIDP40"/>
</dbReference>
<dbReference type="SUPFAM" id="SSF50789">
    <property type="entry name" value="Herpes virus serine proteinase, assemblin"/>
    <property type="match status" value="1"/>
</dbReference>
<keyword id="KW-0877">Alternative promoter usage</keyword>
<keyword id="KW-1035">Host cytoplasm</keyword>
<keyword id="KW-1048">Host nucleus</keyword>
<keyword id="KW-0378">Hydrolase</keyword>
<keyword id="KW-0597">Phosphoprotein</keyword>
<keyword id="KW-0645">Protease</keyword>
<keyword id="KW-1185">Reference proteome</keyword>
<keyword id="KW-0720">Serine protease</keyword>
<keyword id="KW-0118">Viral capsid assembly</keyword>
<keyword id="KW-1188">Viral release from host cell</keyword>
<evidence type="ECO:0000250" key="1"/>
<evidence type="ECO:0000250" key="2">
    <source>
        <dbReference type="UniProtKB" id="P03234"/>
    </source>
</evidence>
<evidence type="ECO:0000250" key="3">
    <source>
        <dbReference type="UniProtKB" id="P16753"/>
    </source>
</evidence>
<evidence type="ECO:0000255" key="4">
    <source>
        <dbReference type="HAMAP-Rule" id="MF_04008"/>
    </source>
</evidence>
<evidence type="ECO:0000256" key="5">
    <source>
        <dbReference type="SAM" id="MobiDB-lite"/>
    </source>
</evidence>
<evidence type="ECO:0000305" key="6"/>
<sequence length="605" mass="64154">MVQAPSVYVCGFVERPDAPPKDACLHLDPLTVKSQLPLKKPLPLTVEHLPDAPVGSVFGLYQSRAGLFSAASITSGVFLSLLDSIYHDCDIAQSQRLPLPREPKLEALHAWLPSLSLASLHPDIPQTTADGGKLSFFDHVSICALGRRRGTTAVYGTDLAWVLKHFSDLEPSIAAQIENDANAAKRESGCPEDHPLPLTKLIAKAIDAGFLRNRVETLRQDRGVANIPAESYLKASDAPDLQKPDKALQSPPPASTDPDTMLSGNAGEGATACGGSAAAGQDLISVPRNTFMTLLQTNLDNKPPRQTPLPYAAPLPPFSHQAIATAPSYGPGAGAVAPAGGYFTSPGGYYAGPAGGDPGAFLAMDAHTYHPHPHPPPAYFGLPGLFGPPPPVPPYYGSHLRADYVPAPSRSNKRKRDPEEDEEGGGLFPGEDATLYRKDIAGLSKSVNELQHTLQALRRETLSYGHTGVGYCPQQGPCYTHPGPYGFQPHQSYEVPRYVPHPPPPPTSHQAAQAQPPPPGTQAPEAHCVAESTIPEAGAAGNSGPREDTNPQQPTTEGHHRGKKLVQASASGVAQSKEPTTPKAKSVSAHLKSIFCEELLNKRVA</sequence>
<accession>Q1HVC7</accession>
<accession>Q1HVC6</accession>